<feature type="initiator methionine" description="Removed" evidence="1">
    <location>
        <position position="1"/>
    </location>
</feature>
<feature type="chain" id="PRO_0000383358" description="Brain acid soluble protein 1 homolog">
    <location>
        <begin position="2"/>
        <end position="197"/>
    </location>
</feature>
<feature type="region of interest" description="Disordered" evidence="2">
    <location>
        <begin position="1"/>
        <end position="197"/>
    </location>
</feature>
<feature type="compositionally biased region" description="Basic residues" evidence="2">
    <location>
        <begin position="1"/>
        <end position="11"/>
    </location>
</feature>
<feature type="compositionally biased region" description="Basic and acidic residues" evidence="2">
    <location>
        <begin position="15"/>
        <end position="26"/>
    </location>
</feature>
<feature type="compositionally biased region" description="Basic and acidic residues" evidence="2">
    <location>
        <begin position="35"/>
        <end position="44"/>
    </location>
</feature>
<feature type="compositionally biased region" description="Low complexity" evidence="2">
    <location>
        <begin position="45"/>
        <end position="66"/>
    </location>
</feature>
<feature type="compositionally biased region" description="Basic and acidic residues" evidence="2">
    <location>
        <begin position="72"/>
        <end position="87"/>
    </location>
</feature>
<feature type="compositionally biased region" description="Low complexity" evidence="2">
    <location>
        <begin position="88"/>
        <end position="98"/>
    </location>
</feature>
<feature type="compositionally biased region" description="Basic and acidic residues" evidence="2">
    <location>
        <begin position="99"/>
        <end position="113"/>
    </location>
</feature>
<feature type="compositionally biased region" description="Basic and acidic residues" evidence="2">
    <location>
        <begin position="134"/>
        <end position="144"/>
    </location>
</feature>
<feature type="compositionally biased region" description="Low complexity" evidence="2">
    <location>
        <begin position="145"/>
        <end position="155"/>
    </location>
</feature>
<feature type="compositionally biased region" description="Basic and acidic residues" evidence="2">
    <location>
        <begin position="156"/>
        <end position="166"/>
    </location>
</feature>
<feature type="lipid moiety-binding region" description="N-myristoyl glycine" evidence="1">
    <location>
        <position position="2"/>
    </location>
</feature>
<proteinExistence type="evidence at transcript level"/>
<gene>
    <name type="primary">basp1</name>
    <name type="ORF">si:ch211-220f13.1</name>
</gene>
<reference key="1">
    <citation type="journal article" date="2013" name="Nature">
        <title>The zebrafish reference genome sequence and its relationship to the human genome.</title>
        <authorList>
            <person name="Howe K."/>
            <person name="Clark M.D."/>
            <person name="Torroja C.F."/>
            <person name="Torrance J."/>
            <person name="Berthelot C."/>
            <person name="Muffato M."/>
            <person name="Collins J.E."/>
            <person name="Humphray S."/>
            <person name="McLaren K."/>
            <person name="Matthews L."/>
            <person name="McLaren S."/>
            <person name="Sealy I."/>
            <person name="Caccamo M."/>
            <person name="Churcher C."/>
            <person name="Scott C."/>
            <person name="Barrett J.C."/>
            <person name="Koch R."/>
            <person name="Rauch G.J."/>
            <person name="White S."/>
            <person name="Chow W."/>
            <person name="Kilian B."/>
            <person name="Quintais L.T."/>
            <person name="Guerra-Assuncao J.A."/>
            <person name="Zhou Y."/>
            <person name="Gu Y."/>
            <person name="Yen J."/>
            <person name="Vogel J.H."/>
            <person name="Eyre T."/>
            <person name="Redmond S."/>
            <person name="Banerjee R."/>
            <person name="Chi J."/>
            <person name="Fu B."/>
            <person name="Langley E."/>
            <person name="Maguire S.F."/>
            <person name="Laird G.K."/>
            <person name="Lloyd D."/>
            <person name="Kenyon E."/>
            <person name="Donaldson S."/>
            <person name="Sehra H."/>
            <person name="Almeida-King J."/>
            <person name="Loveland J."/>
            <person name="Trevanion S."/>
            <person name="Jones M."/>
            <person name="Quail M."/>
            <person name="Willey D."/>
            <person name="Hunt A."/>
            <person name="Burton J."/>
            <person name="Sims S."/>
            <person name="McLay K."/>
            <person name="Plumb B."/>
            <person name="Davis J."/>
            <person name="Clee C."/>
            <person name="Oliver K."/>
            <person name="Clark R."/>
            <person name="Riddle C."/>
            <person name="Elliot D."/>
            <person name="Threadgold G."/>
            <person name="Harden G."/>
            <person name="Ware D."/>
            <person name="Begum S."/>
            <person name="Mortimore B."/>
            <person name="Kerry G."/>
            <person name="Heath P."/>
            <person name="Phillimore B."/>
            <person name="Tracey A."/>
            <person name="Corby N."/>
            <person name="Dunn M."/>
            <person name="Johnson C."/>
            <person name="Wood J."/>
            <person name="Clark S."/>
            <person name="Pelan S."/>
            <person name="Griffiths G."/>
            <person name="Smith M."/>
            <person name="Glithero R."/>
            <person name="Howden P."/>
            <person name="Barker N."/>
            <person name="Lloyd C."/>
            <person name="Stevens C."/>
            <person name="Harley J."/>
            <person name="Holt K."/>
            <person name="Panagiotidis G."/>
            <person name="Lovell J."/>
            <person name="Beasley H."/>
            <person name="Henderson C."/>
            <person name="Gordon D."/>
            <person name="Auger K."/>
            <person name="Wright D."/>
            <person name="Collins J."/>
            <person name="Raisen C."/>
            <person name="Dyer L."/>
            <person name="Leung K."/>
            <person name="Robertson L."/>
            <person name="Ambridge K."/>
            <person name="Leongamornlert D."/>
            <person name="McGuire S."/>
            <person name="Gilderthorp R."/>
            <person name="Griffiths C."/>
            <person name="Manthravadi D."/>
            <person name="Nichol S."/>
            <person name="Barker G."/>
            <person name="Whitehead S."/>
            <person name="Kay M."/>
            <person name="Brown J."/>
            <person name="Murnane C."/>
            <person name="Gray E."/>
            <person name="Humphries M."/>
            <person name="Sycamore N."/>
            <person name="Barker D."/>
            <person name="Saunders D."/>
            <person name="Wallis J."/>
            <person name="Babbage A."/>
            <person name="Hammond S."/>
            <person name="Mashreghi-Mohammadi M."/>
            <person name="Barr L."/>
            <person name="Martin S."/>
            <person name="Wray P."/>
            <person name="Ellington A."/>
            <person name="Matthews N."/>
            <person name="Ellwood M."/>
            <person name="Woodmansey R."/>
            <person name="Clark G."/>
            <person name="Cooper J."/>
            <person name="Tromans A."/>
            <person name="Grafham D."/>
            <person name="Skuce C."/>
            <person name="Pandian R."/>
            <person name="Andrews R."/>
            <person name="Harrison E."/>
            <person name="Kimberley A."/>
            <person name="Garnett J."/>
            <person name="Fosker N."/>
            <person name="Hall R."/>
            <person name="Garner P."/>
            <person name="Kelly D."/>
            <person name="Bird C."/>
            <person name="Palmer S."/>
            <person name="Gehring I."/>
            <person name="Berger A."/>
            <person name="Dooley C.M."/>
            <person name="Ersan-Urun Z."/>
            <person name="Eser C."/>
            <person name="Geiger H."/>
            <person name="Geisler M."/>
            <person name="Karotki L."/>
            <person name="Kirn A."/>
            <person name="Konantz J."/>
            <person name="Konantz M."/>
            <person name="Oberlander M."/>
            <person name="Rudolph-Geiger S."/>
            <person name="Teucke M."/>
            <person name="Lanz C."/>
            <person name="Raddatz G."/>
            <person name="Osoegawa K."/>
            <person name="Zhu B."/>
            <person name="Rapp A."/>
            <person name="Widaa S."/>
            <person name="Langford C."/>
            <person name="Yang F."/>
            <person name="Schuster S.C."/>
            <person name="Carter N.P."/>
            <person name="Harrow J."/>
            <person name="Ning Z."/>
            <person name="Herrero J."/>
            <person name="Searle S.M."/>
            <person name="Enright A."/>
            <person name="Geisler R."/>
            <person name="Plasterk R.H."/>
            <person name="Lee C."/>
            <person name="Westerfield M."/>
            <person name="de Jong P.J."/>
            <person name="Zon L.I."/>
            <person name="Postlethwait J.H."/>
            <person name="Nusslein-Volhard C."/>
            <person name="Hubbard T.J."/>
            <person name="Roest Crollius H."/>
            <person name="Rogers J."/>
            <person name="Stemple D.L."/>
        </authorList>
    </citation>
    <scope>NUCLEOTIDE SEQUENCE [LARGE SCALE GENOMIC DNA]</scope>
    <source>
        <strain>Tuebingen</strain>
    </source>
</reference>
<reference key="2">
    <citation type="submission" date="2006-04" db="EMBL/GenBank/DDBJ databases">
        <authorList>
            <consortium name="NIH - Zebrafish Gene Collection (ZGC) project"/>
        </authorList>
    </citation>
    <scope>NUCLEOTIDE SEQUENCE [LARGE SCALE MRNA]</scope>
    <source>
        <tissue>Larva</tissue>
    </source>
</reference>
<accession>Q1RM09</accession>
<accession>B0S538</accession>
<protein>
    <recommendedName>
        <fullName>Brain acid soluble protein 1 homolog</fullName>
    </recommendedName>
</protein>
<keyword id="KW-1003">Cell membrane</keyword>
<keyword id="KW-0449">Lipoprotein</keyword>
<keyword id="KW-0472">Membrane</keyword>
<keyword id="KW-0519">Myristate</keyword>
<keyword id="KW-1185">Reference proteome</keyword>
<dbReference type="EMBL" id="BX005083">
    <property type="protein sequence ID" value="CAQ14539.1"/>
    <property type="molecule type" value="Genomic_DNA"/>
</dbReference>
<dbReference type="EMBL" id="BC115192">
    <property type="protein sequence ID" value="AAI15193.1"/>
    <property type="status" value="ALT_INIT"/>
    <property type="molecule type" value="mRNA"/>
</dbReference>
<dbReference type="RefSeq" id="NP_001189383.1">
    <property type="nucleotide sequence ID" value="NM_001202454.2"/>
</dbReference>
<dbReference type="FunCoup" id="Q1RM09">
    <property type="interactions" value="76"/>
</dbReference>
<dbReference type="STRING" id="7955.ENSDARP00000069875"/>
<dbReference type="PaxDb" id="7955-ENSDARP00000069875"/>
<dbReference type="Ensembl" id="ENSDART00000075392">
    <property type="protein sequence ID" value="ENSDARP00000069875"/>
    <property type="gene ID" value="ENSDARG00000053358"/>
</dbReference>
<dbReference type="Ensembl" id="ENSDART00000189695">
    <property type="protein sequence ID" value="ENSDARP00000154954"/>
    <property type="gene ID" value="ENSDARG00000110677"/>
</dbReference>
<dbReference type="GeneID" id="569631"/>
<dbReference type="KEGG" id="dre:569631"/>
<dbReference type="AGR" id="ZFIN:ZDB-GENE-070424-158"/>
<dbReference type="CTD" id="10409"/>
<dbReference type="ZFIN" id="ZDB-GENE-070424-158">
    <property type="gene designation" value="basp1"/>
</dbReference>
<dbReference type="eggNOG" id="ENOG502S6KS">
    <property type="taxonomic scope" value="Eukaryota"/>
</dbReference>
<dbReference type="HOGENOM" id="CLU_1365798_0_0_1"/>
<dbReference type="InParanoid" id="Q1RM09"/>
<dbReference type="OMA" id="EEFDHAE"/>
<dbReference type="OrthoDB" id="8964957at2759"/>
<dbReference type="Reactome" id="R-DRE-9035034">
    <property type="pathway name" value="RHOF GTPase cycle"/>
</dbReference>
<dbReference type="PRO" id="PR:Q1RM09"/>
<dbReference type="Proteomes" id="UP000000437">
    <property type="component" value="Alternate scaffold 2"/>
</dbReference>
<dbReference type="Proteomes" id="UP000000437">
    <property type="component" value="Chromosome 2"/>
</dbReference>
<dbReference type="Bgee" id="ENSDARG00000053358">
    <property type="expression patterns" value="Expressed in brain and 17 other cell types or tissues"/>
</dbReference>
<dbReference type="GO" id="GO:0005886">
    <property type="term" value="C:plasma membrane"/>
    <property type="evidence" value="ECO:0007669"/>
    <property type="project" value="UniProtKB-SubCell"/>
</dbReference>
<dbReference type="GO" id="GO:0045766">
    <property type="term" value="P:positive regulation of angiogenesis"/>
    <property type="evidence" value="ECO:0000315"/>
    <property type="project" value="ZFIN"/>
</dbReference>
<dbReference type="InterPro" id="IPR008408">
    <property type="entry name" value="BASP1"/>
</dbReference>
<dbReference type="PANTHER" id="PTHR23212">
    <property type="entry name" value="BRAIN ACID SOLUBLE PROTEIN 1"/>
    <property type="match status" value="1"/>
</dbReference>
<dbReference type="PANTHER" id="PTHR23212:SF0">
    <property type="entry name" value="BRAIN ACID SOLUBLE PROTEIN 1"/>
    <property type="match status" value="1"/>
</dbReference>
<dbReference type="Pfam" id="PF05466">
    <property type="entry name" value="BASP1"/>
    <property type="match status" value="1"/>
</dbReference>
<evidence type="ECO:0000250" key="1"/>
<evidence type="ECO:0000256" key="2">
    <source>
        <dbReference type="SAM" id="MobiDB-lite"/>
    </source>
</evidence>
<evidence type="ECO:0000305" key="3"/>
<name>BASP1_DANRE</name>
<sequence length="197" mass="19997">MGGKLSKKKKGYNVNDEKAKEKDAKTEGASAEESEAPKENKEDAAAATETTNDTAAAAKEATPTADSNSTAPKEEEKSAAPPKKEEPAANANANAPKASDAKTSEAAKAEPAKSPDAPPVKAEEKSAPSAAPANEKEPAKEAAKDPAPAVAAASESKPDAESKKTEAPPTKESAPAEPITTETSPAPNKEQAVAVQD</sequence>
<organism>
    <name type="scientific">Danio rerio</name>
    <name type="common">Zebrafish</name>
    <name type="synonym">Brachydanio rerio</name>
    <dbReference type="NCBI Taxonomy" id="7955"/>
    <lineage>
        <taxon>Eukaryota</taxon>
        <taxon>Metazoa</taxon>
        <taxon>Chordata</taxon>
        <taxon>Craniata</taxon>
        <taxon>Vertebrata</taxon>
        <taxon>Euteleostomi</taxon>
        <taxon>Actinopterygii</taxon>
        <taxon>Neopterygii</taxon>
        <taxon>Teleostei</taxon>
        <taxon>Ostariophysi</taxon>
        <taxon>Cypriniformes</taxon>
        <taxon>Danionidae</taxon>
        <taxon>Danioninae</taxon>
        <taxon>Danio</taxon>
    </lineage>
</organism>
<comment type="subcellular location">
    <subcellularLocation>
        <location evidence="1">Cell membrane</location>
        <topology evidence="1">Lipid-anchor</topology>
    </subcellularLocation>
</comment>
<comment type="similarity">
    <text evidence="3">Belongs to the BASP1 family.</text>
</comment>
<comment type="sequence caution" evidence="3">
    <conflict type="erroneous initiation">
        <sequence resource="EMBL-CDS" id="AAI15193"/>
    </conflict>
</comment>